<sequence length="296" mass="34130">MNLRDFFVITTWWGKILGAFFGYLTAGPVGALFGILVGNFFDRGLVSYYSNPHWLYHAEKQRIVQKAFFEATFSIMGHVAKSDGRVSEQEISMAKSIMNEMKLSKGQKDLAKRLFNEGKQADFNVSLALIQLQRICKDNRDLLKLFVDIQYRAAQVDGLSSQKIHALDNIFTHLGFAPLHKQYRFYEDFGSYFQQEQSKQHYHNQQEYKHTSSSQGQQGYKPQSPPNTLAHAFALLEVSPNANKQEVRRAYRRLLSRNHPDKLIAQGLPEEMIKLANDKTHQIMKAYELICETKGW</sequence>
<gene>
    <name evidence="1" type="primary">djlA</name>
    <name type="ordered locus">lpg2341</name>
</gene>
<organism>
    <name type="scientific">Legionella pneumophila subsp. pneumophila (strain Philadelphia 1 / ATCC 33152 / DSM 7513)</name>
    <dbReference type="NCBI Taxonomy" id="272624"/>
    <lineage>
        <taxon>Bacteria</taxon>
        <taxon>Pseudomonadati</taxon>
        <taxon>Pseudomonadota</taxon>
        <taxon>Gammaproteobacteria</taxon>
        <taxon>Legionellales</taxon>
        <taxon>Legionellaceae</taxon>
        <taxon>Legionella</taxon>
    </lineage>
</organism>
<name>DJLA_LEGPH</name>
<feature type="chain" id="PRO_0000209430" description="Co-chaperone protein DjlA">
    <location>
        <begin position="1"/>
        <end position="296"/>
    </location>
</feature>
<feature type="topological domain" description="Periplasmic" evidence="1">
    <location>
        <begin position="1"/>
        <end position="15"/>
    </location>
</feature>
<feature type="transmembrane region" description="Helical" evidence="1">
    <location>
        <begin position="16"/>
        <end position="39"/>
    </location>
</feature>
<feature type="topological domain" description="Cytoplasmic" evidence="1">
    <location>
        <begin position="40"/>
        <end position="296"/>
    </location>
</feature>
<feature type="domain" description="J" evidence="1">
    <location>
        <begin position="231"/>
        <end position="296"/>
    </location>
</feature>
<feature type="region of interest" description="Disordered" evidence="2">
    <location>
        <begin position="200"/>
        <end position="225"/>
    </location>
</feature>
<feature type="compositionally biased region" description="Polar residues" evidence="2">
    <location>
        <begin position="211"/>
        <end position="221"/>
    </location>
</feature>
<evidence type="ECO:0000255" key="1">
    <source>
        <dbReference type="HAMAP-Rule" id="MF_01153"/>
    </source>
</evidence>
<evidence type="ECO:0000256" key="2">
    <source>
        <dbReference type="SAM" id="MobiDB-lite"/>
    </source>
</evidence>
<evidence type="ECO:0000305" key="3"/>
<dbReference type="EMBL" id="AJ011775">
    <property type="protein sequence ID" value="CAB43070.1"/>
    <property type="molecule type" value="Genomic_DNA"/>
</dbReference>
<dbReference type="EMBL" id="AE017354">
    <property type="protein sequence ID" value="AAU28403.1"/>
    <property type="status" value="ALT_INIT"/>
    <property type="molecule type" value="Genomic_DNA"/>
</dbReference>
<dbReference type="RefSeq" id="WP_010948047.1">
    <property type="nucleotide sequence ID" value="NC_002942.5"/>
</dbReference>
<dbReference type="RefSeq" id="YP_096350.2">
    <property type="nucleotide sequence ID" value="NC_002942.5"/>
</dbReference>
<dbReference type="SMR" id="Q9X772"/>
<dbReference type="STRING" id="272624.lpg2341"/>
<dbReference type="PaxDb" id="272624-lpg2341"/>
<dbReference type="GeneID" id="57036333"/>
<dbReference type="KEGG" id="lpn:lpg2341"/>
<dbReference type="PATRIC" id="fig|272624.6.peg.2459"/>
<dbReference type="eggNOG" id="COG1076">
    <property type="taxonomic scope" value="Bacteria"/>
</dbReference>
<dbReference type="HOGENOM" id="CLU_066221_1_0_6"/>
<dbReference type="OrthoDB" id="9782583at2"/>
<dbReference type="Proteomes" id="UP000000609">
    <property type="component" value="Chromosome"/>
</dbReference>
<dbReference type="GO" id="GO:0005886">
    <property type="term" value="C:plasma membrane"/>
    <property type="evidence" value="ECO:0007669"/>
    <property type="project" value="UniProtKB-SubCell"/>
</dbReference>
<dbReference type="GO" id="GO:0051087">
    <property type="term" value="F:protein-folding chaperone binding"/>
    <property type="evidence" value="ECO:0007669"/>
    <property type="project" value="InterPro"/>
</dbReference>
<dbReference type="CDD" id="cd06257">
    <property type="entry name" value="DnaJ"/>
    <property type="match status" value="1"/>
</dbReference>
<dbReference type="CDD" id="cd07316">
    <property type="entry name" value="terB_like_DjlA"/>
    <property type="match status" value="1"/>
</dbReference>
<dbReference type="Gene3D" id="1.10.287.110">
    <property type="entry name" value="DnaJ domain"/>
    <property type="match status" value="1"/>
</dbReference>
<dbReference type="Gene3D" id="1.10.3680.10">
    <property type="entry name" value="TerB-like"/>
    <property type="match status" value="1"/>
</dbReference>
<dbReference type="HAMAP" id="MF_01153">
    <property type="entry name" value="DjlA"/>
    <property type="match status" value="1"/>
</dbReference>
<dbReference type="InterPro" id="IPR023749">
    <property type="entry name" value="DjlA"/>
</dbReference>
<dbReference type="InterPro" id="IPR007791">
    <property type="entry name" value="DjlA_N"/>
</dbReference>
<dbReference type="InterPro" id="IPR001623">
    <property type="entry name" value="DnaJ_domain"/>
</dbReference>
<dbReference type="InterPro" id="IPR036869">
    <property type="entry name" value="J_dom_sf"/>
</dbReference>
<dbReference type="InterPro" id="IPR029024">
    <property type="entry name" value="TerB-like"/>
</dbReference>
<dbReference type="NCBIfam" id="NF006948">
    <property type="entry name" value="PRK09430.1"/>
    <property type="match status" value="1"/>
</dbReference>
<dbReference type="Pfam" id="PF00226">
    <property type="entry name" value="DnaJ"/>
    <property type="match status" value="1"/>
</dbReference>
<dbReference type="Pfam" id="PF05099">
    <property type="entry name" value="TerB"/>
    <property type="match status" value="1"/>
</dbReference>
<dbReference type="PRINTS" id="PR00625">
    <property type="entry name" value="JDOMAIN"/>
</dbReference>
<dbReference type="SMART" id="SM00271">
    <property type="entry name" value="DnaJ"/>
    <property type="match status" value="1"/>
</dbReference>
<dbReference type="SUPFAM" id="SSF46565">
    <property type="entry name" value="Chaperone J-domain"/>
    <property type="match status" value="1"/>
</dbReference>
<dbReference type="SUPFAM" id="SSF158682">
    <property type="entry name" value="TerB-like"/>
    <property type="match status" value="1"/>
</dbReference>
<dbReference type="PROSITE" id="PS50076">
    <property type="entry name" value="DNAJ_2"/>
    <property type="match status" value="1"/>
</dbReference>
<protein>
    <recommendedName>
        <fullName evidence="1">Co-chaperone protein DjlA</fullName>
    </recommendedName>
</protein>
<accession>Q9X772</accession>
<accession>Q5ZT24</accession>
<proteinExistence type="inferred from homology"/>
<comment type="function">
    <text evidence="1">Regulatory DnaK co-chaperone. Direct interaction between DnaK and DjlA is needed for the induction of the wcaABCDE operon, involved in the synthesis of a colanic acid polysaccharide capsule, possibly through activation of the RcsB/RcsC phosphotransfer signaling pathway. The colanic acid capsule may help the bacterium survive conditions outside the host.</text>
</comment>
<comment type="subunit">
    <text evidence="1">Homodimer.</text>
</comment>
<comment type="subcellular location">
    <subcellularLocation>
        <location evidence="1">Cell inner membrane</location>
        <topology evidence="1">Single-pass type III membrane protein</topology>
    </subcellularLocation>
</comment>
<comment type="domain">
    <text evidence="1">The transmembrane domain is a dimerization domain.</text>
</comment>
<comment type="sequence caution" evidence="3">
    <conflict type="erroneous initiation">
        <sequence resource="EMBL-CDS" id="AAU28403"/>
    </conflict>
</comment>
<reference key="1">
    <citation type="journal article" date="2000" name="J. Bacteriol.">
        <title>3-deoxy-D-manno-oct-2-ulosonic acid (Kdo) transferase of Legionella pneumophila transfers two kdo residues to a structurally different lipid A precursor of Escherichia coli.</title>
        <authorList>
            <person name="Brabetz W."/>
            <person name="Schirmer C.E."/>
            <person name="Brade H."/>
        </authorList>
    </citation>
    <scope>NUCLEOTIDE SEQUENCE [GENOMIC DNA]</scope>
</reference>
<reference key="2">
    <citation type="journal article" date="2004" name="Science">
        <title>The genomic sequence of the accidental pathogen Legionella pneumophila.</title>
        <authorList>
            <person name="Chien M."/>
            <person name="Morozova I."/>
            <person name="Shi S."/>
            <person name="Sheng H."/>
            <person name="Chen J."/>
            <person name="Gomez S.M."/>
            <person name="Asamani G."/>
            <person name="Hill K."/>
            <person name="Nuara J."/>
            <person name="Feder M."/>
            <person name="Rineer J."/>
            <person name="Greenberg J.J."/>
            <person name="Steshenko V."/>
            <person name="Park S.H."/>
            <person name="Zhao B."/>
            <person name="Teplitskaya E."/>
            <person name="Edwards J.R."/>
            <person name="Pampou S."/>
            <person name="Georghiou A."/>
            <person name="Chou I.-C."/>
            <person name="Iannuccilli W."/>
            <person name="Ulz M.E."/>
            <person name="Kim D.H."/>
            <person name="Geringer-Sameth A."/>
            <person name="Goldsberry C."/>
            <person name="Morozov P."/>
            <person name="Fischer S.G."/>
            <person name="Segal G."/>
            <person name="Qu X."/>
            <person name="Rzhetsky A."/>
            <person name="Zhang P."/>
            <person name="Cayanis E."/>
            <person name="De Jong P.J."/>
            <person name="Ju J."/>
            <person name="Kalachikov S."/>
            <person name="Shuman H.A."/>
            <person name="Russo J.J."/>
        </authorList>
    </citation>
    <scope>NUCLEOTIDE SEQUENCE [LARGE SCALE GENOMIC DNA]</scope>
    <source>
        <strain>Philadelphia 1 / ATCC 33152 / DSM 7513</strain>
    </source>
</reference>
<keyword id="KW-0997">Cell inner membrane</keyword>
<keyword id="KW-1003">Cell membrane</keyword>
<keyword id="KW-0143">Chaperone</keyword>
<keyword id="KW-0472">Membrane</keyword>
<keyword id="KW-1185">Reference proteome</keyword>
<keyword id="KW-0812">Transmembrane</keyword>
<keyword id="KW-1133">Transmembrane helix</keyword>